<feature type="chain" id="PRO_0000110049" description="Fluoride-specific ion channel FluC 2">
    <location>
        <begin position="1"/>
        <end position="134"/>
    </location>
</feature>
<feature type="transmembrane region" description="Helical" evidence="1">
    <location>
        <begin position="8"/>
        <end position="28"/>
    </location>
</feature>
<feature type="transmembrane region" description="Helical" evidence="1">
    <location>
        <begin position="40"/>
        <end position="60"/>
    </location>
</feature>
<feature type="transmembrane region" description="Helical" evidence="1">
    <location>
        <begin position="69"/>
        <end position="89"/>
    </location>
</feature>
<feature type="transmembrane region" description="Helical" evidence="1">
    <location>
        <begin position="99"/>
        <end position="119"/>
    </location>
</feature>
<feature type="binding site" evidence="1">
    <location>
        <position position="75"/>
    </location>
    <ligand>
        <name>Na(+)</name>
        <dbReference type="ChEBI" id="CHEBI:29101"/>
        <note>structural</note>
    </ligand>
</feature>
<feature type="binding site" evidence="1">
    <location>
        <position position="78"/>
    </location>
    <ligand>
        <name>Na(+)</name>
        <dbReference type="ChEBI" id="CHEBI:29101"/>
        <note>structural</note>
    </ligand>
</feature>
<dbReference type="EMBL" id="BA000004">
    <property type="protein sequence ID" value="BAB06706.1"/>
    <property type="molecule type" value="Genomic_DNA"/>
</dbReference>
<dbReference type="PIR" id="C84023">
    <property type="entry name" value="C84023"/>
</dbReference>
<dbReference type="RefSeq" id="WP_010899131.1">
    <property type="nucleotide sequence ID" value="NC_002570.2"/>
</dbReference>
<dbReference type="SMR" id="Q9K8L9"/>
<dbReference type="STRING" id="272558.gene:10728897"/>
<dbReference type="KEGG" id="bha:BH2987"/>
<dbReference type="eggNOG" id="COG0239">
    <property type="taxonomic scope" value="Bacteria"/>
</dbReference>
<dbReference type="HOGENOM" id="CLU_114342_1_2_9"/>
<dbReference type="OrthoDB" id="9815830at2"/>
<dbReference type="Proteomes" id="UP000001258">
    <property type="component" value="Chromosome"/>
</dbReference>
<dbReference type="GO" id="GO:0005886">
    <property type="term" value="C:plasma membrane"/>
    <property type="evidence" value="ECO:0007669"/>
    <property type="project" value="UniProtKB-SubCell"/>
</dbReference>
<dbReference type="GO" id="GO:0062054">
    <property type="term" value="F:fluoride channel activity"/>
    <property type="evidence" value="ECO:0007669"/>
    <property type="project" value="UniProtKB-UniRule"/>
</dbReference>
<dbReference type="GO" id="GO:0046872">
    <property type="term" value="F:metal ion binding"/>
    <property type="evidence" value="ECO:0007669"/>
    <property type="project" value="UniProtKB-KW"/>
</dbReference>
<dbReference type="GO" id="GO:0140114">
    <property type="term" value="P:cellular detoxification of fluoride"/>
    <property type="evidence" value="ECO:0007669"/>
    <property type="project" value="UniProtKB-UniRule"/>
</dbReference>
<dbReference type="HAMAP" id="MF_00454">
    <property type="entry name" value="FluC"/>
    <property type="match status" value="1"/>
</dbReference>
<dbReference type="InterPro" id="IPR003691">
    <property type="entry name" value="FluC"/>
</dbReference>
<dbReference type="PANTHER" id="PTHR28259">
    <property type="entry name" value="FLUORIDE EXPORT PROTEIN 1-RELATED"/>
    <property type="match status" value="1"/>
</dbReference>
<dbReference type="PANTHER" id="PTHR28259:SF1">
    <property type="entry name" value="FLUORIDE EXPORT PROTEIN 1-RELATED"/>
    <property type="match status" value="1"/>
</dbReference>
<dbReference type="Pfam" id="PF02537">
    <property type="entry name" value="CRCB"/>
    <property type="match status" value="1"/>
</dbReference>
<gene>
    <name evidence="1" type="primary">fluC2</name>
    <name evidence="1" type="synonym">crcB2</name>
    <name type="ordered locus">BH2987</name>
</gene>
<accession>Q9K8L9</accession>
<name>FLUC2_HALH5</name>
<keyword id="KW-1003">Cell membrane</keyword>
<keyword id="KW-0407">Ion channel</keyword>
<keyword id="KW-0406">Ion transport</keyword>
<keyword id="KW-0472">Membrane</keyword>
<keyword id="KW-0479">Metal-binding</keyword>
<keyword id="KW-1185">Reference proteome</keyword>
<keyword id="KW-0915">Sodium</keyword>
<keyword id="KW-0812">Transmembrane</keyword>
<keyword id="KW-1133">Transmembrane helix</keyword>
<keyword id="KW-0813">Transport</keyword>
<proteinExistence type="inferred from homology"/>
<evidence type="ECO:0000255" key="1">
    <source>
        <dbReference type="HAMAP-Rule" id="MF_00454"/>
    </source>
</evidence>
<reference key="1">
    <citation type="journal article" date="2000" name="Nucleic Acids Res.">
        <title>Complete genome sequence of the alkaliphilic bacterium Bacillus halodurans and genomic sequence comparison with Bacillus subtilis.</title>
        <authorList>
            <person name="Takami H."/>
            <person name="Nakasone K."/>
            <person name="Takaki Y."/>
            <person name="Maeno G."/>
            <person name="Sasaki R."/>
            <person name="Masui N."/>
            <person name="Fuji F."/>
            <person name="Hirama C."/>
            <person name="Nakamura Y."/>
            <person name="Ogasawara N."/>
            <person name="Kuhara S."/>
            <person name="Horikoshi K."/>
        </authorList>
    </citation>
    <scope>NUCLEOTIDE SEQUENCE [LARGE SCALE GENOMIC DNA]</scope>
    <source>
        <strain>ATCC BAA-125 / DSM 18197 / FERM 7344 / JCM 9153 / C-125</strain>
    </source>
</reference>
<comment type="function">
    <text evidence="1">Fluoride-specific ion channel. Important for reducing fluoride concentration in the cell, thus reducing its toxicity.</text>
</comment>
<comment type="catalytic activity">
    <reaction evidence="1">
        <text>fluoride(in) = fluoride(out)</text>
        <dbReference type="Rhea" id="RHEA:76159"/>
        <dbReference type="ChEBI" id="CHEBI:17051"/>
    </reaction>
    <physiologicalReaction direction="left-to-right" evidence="1">
        <dbReference type="Rhea" id="RHEA:76160"/>
    </physiologicalReaction>
</comment>
<comment type="activity regulation">
    <text evidence="1">Na(+) is not transported, but it plays an essential structural role and its presence is essential for fluoride channel function.</text>
</comment>
<comment type="subcellular location">
    <subcellularLocation>
        <location evidence="1">Cell membrane</location>
        <topology evidence="1">Multi-pass membrane protein</topology>
    </subcellularLocation>
</comment>
<comment type="similarity">
    <text evidence="1">Belongs to the fluoride channel Fluc/FEX (TC 1.A.43) family.</text>
</comment>
<sequence>MRQTVKEIVAIGIGGAIGTSFRFLLNTWTLTTGYPYGTLIENIVGSFLLGFLTSWFLVIVPKEWLKKGLGVGLCGGFTTMSTLAADSVLLYSHHPFSSLIYVAASLFGGIGFALLGYLLASKIATRRKREVAGS</sequence>
<protein>
    <recommendedName>
        <fullName evidence="1">Fluoride-specific ion channel FluC 2</fullName>
    </recommendedName>
</protein>
<organism>
    <name type="scientific">Halalkalibacterium halodurans (strain ATCC BAA-125 / DSM 18197 / FERM 7344 / JCM 9153 / C-125)</name>
    <name type="common">Bacillus halodurans</name>
    <dbReference type="NCBI Taxonomy" id="272558"/>
    <lineage>
        <taxon>Bacteria</taxon>
        <taxon>Bacillati</taxon>
        <taxon>Bacillota</taxon>
        <taxon>Bacilli</taxon>
        <taxon>Bacillales</taxon>
        <taxon>Bacillaceae</taxon>
        <taxon>Halalkalibacterium (ex Joshi et al. 2022)</taxon>
    </lineage>
</organism>